<accession>B7J5V5</accession>
<sequence length="68" mass="7652">MKSNIHPKYEEITVTCSCGNVFKTRSTANRDLHIDLCSECHPFYTGKQRAVSAAGQVEKFRKRYGGGQ</sequence>
<evidence type="ECO:0000255" key="1">
    <source>
        <dbReference type="HAMAP-Rule" id="MF_00501"/>
    </source>
</evidence>
<evidence type="ECO:0000305" key="2"/>
<gene>
    <name evidence="1" type="primary">rpmE</name>
    <name type="ordered locus">AFE_0659</name>
</gene>
<proteinExistence type="inferred from homology"/>
<organism>
    <name type="scientific">Acidithiobacillus ferrooxidans (strain ATCC 23270 / DSM 14882 / CIP 104768 / NCIMB 8455)</name>
    <name type="common">Ferrobacillus ferrooxidans (strain ATCC 23270)</name>
    <dbReference type="NCBI Taxonomy" id="243159"/>
    <lineage>
        <taxon>Bacteria</taxon>
        <taxon>Pseudomonadati</taxon>
        <taxon>Pseudomonadota</taxon>
        <taxon>Acidithiobacillia</taxon>
        <taxon>Acidithiobacillales</taxon>
        <taxon>Acidithiobacillaceae</taxon>
        <taxon>Acidithiobacillus</taxon>
    </lineage>
</organism>
<dbReference type="EMBL" id="CP001219">
    <property type="protein sequence ID" value="ACK79651.1"/>
    <property type="molecule type" value="Genomic_DNA"/>
</dbReference>
<dbReference type="RefSeq" id="WP_012536269.1">
    <property type="nucleotide sequence ID" value="NC_011761.1"/>
</dbReference>
<dbReference type="SMR" id="B7J5V5"/>
<dbReference type="STRING" id="243159.AFE_0659"/>
<dbReference type="PaxDb" id="243159-AFE_0659"/>
<dbReference type="GeneID" id="65280010"/>
<dbReference type="KEGG" id="afr:AFE_0659"/>
<dbReference type="eggNOG" id="COG0254">
    <property type="taxonomic scope" value="Bacteria"/>
</dbReference>
<dbReference type="HOGENOM" id="CLU_114306_4_0_6"/>
<dbReference type="Proteomes" id="UP000001362">
    <property type="component" value="Chromosome"/>
</dbReference>
<dbReference type="GO" id="GO:1990904">
    <property type="term" value="C:ribonucleoprotein complex"/>
    <property type="evidence" value="ECO:0007669"/>
    <property type="project" value="UniProtKB-KW"/>
</dbReference>
<dbReference type="GO" id="GO:0005840">
    <property type="term" value="C:ribosome"/>
    <property type="evidence" value="ECO:0007669"/>
    <property type="project" value="UniProtKB-KW"/>
</dbReference>
<dbReference type="GO" id="GO:0046872">
    <property type="term" value="F:metal ion binding"/>
    <property type="evidence" value="ECO:0007669"/>
    <property type="project" value="UniProtKB-KW"/>
</dbReference>
<dbReference type="GO" id="GO:0019843">
    <property type="term" value="F:rRNA binding"/>
    <property type="evidence" value="ECO:0007669"/>
    <property type="project" value="UniProtKB-KW"/>
</dbReference>
<dbReference type="GO" id="GO:0003735">
    <property type="term" value="F:structural constituent of ribosome"/>
    <property type="evidence" value="ECO:0007669"/>
    <property type="project" value="InterPro"/>
</dbReference>
<dbReference type="GO" id="GO:0006412">
    <property type="term" value="P:translation"/>
    <property type="evidence" value="ECO:0007669"/>
    <property type="project" value="UniProtKB-UniRule"/>
</dbReference>
<dbReference type="Gene3D" id="4.10.830.30">
    <property type="entry name" value="Ribosomal protein L31"/>
    <property type="match status" value="1"/>
</dbReference>
<dbReference type="HAMAP" id="MF_00501">
    <property type="entry name" value="Ribosomal_bL31_1"/>
    <property type="match status" value="1"/>
</dbReference>
<dbReference type="InterPro" id="IPR034704">
    <property type="entry name" value="Ribosomal_bL28/bL31-like_sf"/>
</dbReference>
<dbReference type="InterPro" id="IPR002150">
    <property type="entry name" value="Ribosomal_bL31"/>
</dbReference>
<dbReference type="InterPro" id="IPR027491">
    <property type="entry name" value="Ribosomal_bL31_A"/>
</dbReference>
<dbReference type="InterPro" id="IPR042105">
    <property type="entry name" value="Ribosomal_bL31_sf"/>
</dbReference>
<dbReference type="NCBIfam" id="TIGR00105">
    <property type="entry name" value="L31"/>
    <property type="match status" value="1"/>
</dbReference>
<dbReference type="NCBIfam" id="NF000612">
    <property type="entry name" value="PRK00019.1"/>
    <property type="match status" value="1"/>
</dbReference>
<dbReference type="NCBIfam" id="NF001809">
    <property type="entry name" value="PRK00528.1"/>
    <property type="match status" value="1"/>
</dbReference>
<dbReference type="PANTHER" id="PTHR33280">
    <property type="entry name" value="50S RIBOSOMAL PROTEIN L31, CHLOROPLASTIC"/>
    <property type="match status" value="1"/>
</dbReference>
<dbReference type="PANTHER" id="PTHR33280:SF6">
    <property type="entry name" value="LARGE RIBOSOMAL SUBUNIT PROTEIN BL31A"/>
    <property type="match status" value="1"/>
</dbReference>
<dbReference type="Pfam" id="PF01197">
    <property type="entry name" value="Ribosomal_L31"/>
    <property type="match status" value="1"/>
</dbReference>
<dbReference type="PRINTS" id="PR01249">
    <property type="entry name" value="RIBOSOMALL31"/>
</dbReference>
<dbReference type="SUPFAM" id="SSF143800">
    <property type="entry name" value="L28p-like"/>
    <property type="match status" value="1"/>
</dbReference>
<protein>
    <recommendedName>
        <fullName evidence="1">Large ribosomal subunit protein bL31</fullName>
    </recommendedName>
    <alternativeName>
        <fullName evidence="2">50S ribosomal protein L31</fullName>
    </alternativeName>
</protein>
<comment type="function">
    <text evidence="1">Binds the 23S rRNA.</text>
</comment>
<comment type="cofactor">
    <cofactor evidence="1">
        <name>Zn(2+)</name>
        <dbReference type="ChEBI" id="CHEBI:29105"/>
    </cofactor>
    <text evidence="1">Binds 1 zinc ion per subunit.</text>
</comment>
<comment type="subunit">
    <text evidence="1">Part of the 50S ribosomal subunit.</text>
</comment>
<comment type="similarity">
    <text evidence="1">Belongs to the bacterial ribosomal protein bL31 family. Type A subfamily.</text>
</comment>
<keyword id="KW-0479">Metal-binding</keyword>
<keyword id="KW-1185">Reference proteome</keyword>
<keyword id="KW-0687">Ribonucleoprotein</keyword>
<keyword id="KW-0689">Ribosomal protein</keyword>
<keyword id="KW-0694">RNA-binding</keyword>
<keyword id="KW-0699">rRNA-binding</keyword>
<keyword id="KW-0862">Zinc</keyword>
<feature type="chain" id="PRO_1000126549" description="Large ribosomal subunit protein bL31">
    <location>
        <begin position="1"/>
        <end position="68"/>
    </location>
</feature>
<feature type="binding site" evidence="1">
    <location>
        <position position="16"/>
    </location>
    <ligand>
        <name>Zn(2+)</name>
        <dbReference type="ChEBI" id="CHEBI:29105"/>
    </ligand>
</feature>
<feature type="binding site" evidence="1">
    <location>
        <position position="18"/>
    </location>
    <ligand>
        <name>Zn(2+)</name>
        <dbReference type="ChEBI" id="CHEBI:29105"/>
    </ligand>
</feature>
<feature type="binding site" evidence="1">
    <location>
        <position position="37"/>
    </location>
    <ligand>
        <name>Zn(2+)</name>
        <dbReference type="ChEBI" id="CHEBI:29105"/>
    </ligand>
</feature>
<feature type="binding site" evidence="1">
    <location>
        <position position="40"/>
    </location>
    <ligand>
        <name>Zn(2+)</name>
        <dbReference type="ChEBI" id="CHEBI:29105"/>
    </ligand>
</feature>
<name>RL31_ACIF2</name>
<reference key="1">
    <citation type="journal article" date="2008" name="BMC Genomics">
        <title>Acidithiobacillus ferrooxidans metabolism: from genome sequence to industrial applications.</title>
        <authorList>
            <person name="Valdes J."/>
            <person name="Pedroso I."/>
            <person name="Quatrini R."/>
            <person name="Dodson R.J."/>
            <person name="Tettelin H."/>
            <person name="Blake R. II"/>
            <person name="Eisen J.A."/>
            <person name="Holmes D.S."/>
        </authorList>
    </citation>
    <scope>NUCLEOTIDE SEQUENCE [LARGE SCALE GENOMIC DNA]</scope>
    <source>
        <strain>ATCC 23270 / DSM 14882 / CIP 104768 / NCIMB 8455</strain>
    </source>
</reference>